<keyword id="KW-0131">Cell cycle</keyword>
<keyword id="KW-0132">Cell division</keyword>
<keyword id="KW-0143">Chaperone</keyword>
<keyword id="KW-0963">Cytoplasm</keyword>
<keyword id="KW-0413">Isomerase</keyword>
<keyword id="KW-0697">Rotamase</keyword>
<accession>A1JNN4</accession>
<sequence>MQVSVETTQGLGRRVTITVAADSIEKAVKSELVKAAKNVRIDGFRKGHVPMNIVEQRYGASVRQDVLGDLMQRNFVDAIIKEKINPAGAPNYVPGQYKEGEDFTYSVEFEVYPEVELKDLESIEVEKPVVEVNDADVDTMLETLRKQQATWKETDAAATAEDRATLDFTGSIDGEVFEGGKATDFVLAMGQGRMIPGFEEGVIGHKAGEEFTIDVNFPEDYHAENLKGKSAKFDIVLKKVEVRELPELTEEFIKRFGVADGSVAGLRAEVRKNMERELKGAVRNRVKTQAIDGLVSANEIDVPAALVEGEIDVLRRQAAQRFGGNEKQAAELPRELFEEQAKRRVVVGLLLGEVISQHELKADEDRVKALIEEMASAYEDPQEVIEFYSKNKELMNNMRNVALEEQAVETLLSKAKVTEKPTTFSELMNQTTTA</sequence>
<comment type="function">
    <text evidence="1">Involved in protein export. Acts as a chaperone by maintaining the newly synthesized protein in an open conformation. Functions as a peptidyl-prolyl cis-trans isomerase.</text>
</comment>
<comment type="catalytic activity">
    <reaction evidence="1">
        <text>[protein]-peptidylproline (omega=180) = [protein]-peptidylproline (omega=0)</text>
        <dbReference type="Rhea" id="RHEA:16237"/>
        <dbReference type="Rhea" id="RHEA-COMP:10747"/>
        <dbReference type="Rhea" id="RHEA-COMP:10748"/>
        <dbReference type="ChEBI" id="CHEBI:83833"/>
        <dbReference type="ChEBI" id="CHEBI:83834"/>
        <dbReference type="EC" id="5.2.1.8"/>
    </reaction>
</comment>
<comment type="subcellular location">
    <subcellularLocation>
        <location>Cytoplasm</location>
    </subcellularLocation>
    <text evidence="1">About half TF is bound to the ribosome near the polypeptide exit tunnel while the other half is free in the cytoplasm.</text>
</comment>
<comment type="domain">
    <text evidence="1">Consists of 3 domains; the N-terminus binds the ribosome, the middle domain has PPIase activity, while the C-terminus has intrinsic chaperone activity on its own.</text>
</comment>
<comment type="similarity">
    <text evidence="1">Belongs to the FKBP-type PPIase family. Tig subfamily.</text>
</comment>
<proteinExistence type="inferred from homology"/>
<protein>
    <recommendedName>
        <fullName evidence="1">Trigger factor</fullName>
        <shortName evidence="1">TF</shortName>
        <ecNumber evidence="1">5.2.1.8</ecNumber>
    </recommendedName>
    <alternativeName>
        <fullName evidence="1">PPIase</fullName>
    </alternativeName>
</protein>
<dbReference type="EC" id="5.2.1.8" evidence="1"/>
<dbReference type="EMBL" id="AM286415">
    <property type="protein sequence ID" value="CAL13170.1"/>
    <property type="molecule type" value="Genomic_DNA"/>
</dbReference>
<dbReference type="RefSeq" id="WP_005163508.1">
    <property type="nucleotide sequence ID" value="NC_008800.1"/>
</dbReference>
<dbReference type="RefSeq" id="YP_001007317.1">
    <property type="nucleotide sequence ID" value="NC_008800.1"/>
</dbReference>
<dbReference type="SMR" id="A1JNN4"/>
<dbReference type="GeneID" id="31410080"/>
<dbReference type="KEGG" id="yen:YE3135"/>
<dbReference type="PATRIC" id="fig|393305.7.peg.3339"/>
<dbReference type="eggNOG" id="COG0544">
    <property type="taxonomic scope" value="Bacteria"/>
</dbReference>
<dbReference type="HOGENOM" id="CLU_033058_2_0_6"/>
<dbReference type="OrthoDB" id="9767721at2"/>
<dbReference type="Proteomes" id="UP000000642">
    <property type="component" value="Chromosome"/>
</dbReference>
<dbReference type="GO" id="GO:0005737">
    <property type="term" value="C:cytoplasm"/>
    <property type="evidence" value="ECO:0007669"/>
    <property type="project" value="UniProtKB-SubCell"/>
</dbReference>
<dbReference type="GO" id="GO:0003755">
    <property type="term" value="F:peptidyl-prolyl cis-trans isomerase activity"/>
    <property type="evidence" value="ECO:0007669"/>
    <property type="project" value="UniProtKB-UniRule"/>
</dbReference>
<dbReference type="GO" id="GO:0044183">
    <property type="term" value="F:protein folding chaperone"/>
    <property type="evidence" value="ECO:0007669"/>
    <property type="project" value="TreeGrafter"/>
</dbReference>
<dbReference type="GO" id="GO:0043022">
    <property type="term" value="F:ribosome binding"/>
    <property type="evidence" value="ECO:0007669"/>
    <property type="project" value="TreeGrafter"/>
</dbReference>
<dbReference type="GO" id="GO:0051083">
    <property type="term" value="P:'de novo' cotranslational protein folding"/>
    <property type="evidence" value="ECO:0007669"/>
    <property type="project" value="TreeGrafter"/>
</dbReference>
<dbReference type="GO" id="GO:0051301">
    <property type="term" value="P:cell division"/>
    <property type="evidence" value="ECO:0007669"/>
    <property type="project" value="UniProtKB-KW"/>
</dbReference>
<dbReference type="GO" id="GO:0061077">
    <property type="term" value="P:chaperone-mediated protein folding"/>
    <property type="evidence" value="ECO:0007669"/>
    <property type="project" value="TreeGrafter"/>
</dbReference>
<dbReference type="GO" id="GO:0015031">
    <property type="term" value="P:protein transport"/>
    <property type="evidence" value="ECO:0007669"/>
    <property type="project" value="UniProtKB-UniRule"/>
</dbReference>
<dbReference type="GO" id="GO:0043335">
    <property type="term" value="P:protein unfolding"/>
    <property type="evidence" value="ECO:0007669"/>
    <property type="project" value="TreeGrafter"/>
</dbReference>
<dbReference type="FunFam" id="1.10.3120.10:FF:000001">
    <property type="entry name" value="Trigger factor"/>
    <property type="match status" value="1"/>
</dbReference>
<dbReference type="FunFam" id="3.10.50.40:FF:000001">
    <property type="entry name" value="Trigger factor"/>
    <property type="match status" value="1"/>
</dbReference>
<dbReference type="FunFam" id="3.30.70.1050:FF:000001">
    <property type="entry name" value="Trigger factor"/>
    <property type="match status" value="1"/>
</dbReference>
<dbReference type="Gene3D" id="3.10.50.40">
    <property type="match status" value="1"/>
</dbReference>
<dbReference type="Gene3D" id="3.30.70.1050">
    <property type="entry name" value="Trigger factor ribosome-binding domain"/>
    <property type="match status" value="1"/>
</dbReference>
<dbReference type="Gene3D" id="1.10.3120.10">
    <property type="entry name" value="Trigger factor, C-terminal domain"/>
    <property type="match status" value="1"/>
</dbReference>
<dbReference type="HAMAP" id="MF_00303">
    <property type="entry name" value="Trigger_factor_Tig"/>
    <property type="match status" value="1"/>
</dbReference>
<dbReference type="InterPro" id="IPR046357">
    <property type="entry name" value="PPIase_dom_sf"/>
</dbReference>
<dbReference type="InterPro" id="IPR001179">
    <property type="entry name" value="PPIase_FKBP_dom"/>
</dbReference>
<dbReference type="InterPro" id="IPR005215">
    <property type="entry name" value="Trig_fac"/>
</dbReference>
<dbReference type="InterPro" id="IPR008880">
    <property type="entry name" value="Trigger_fac_C"/>
</dbReference>
<dbReference type="InterPro" id="IPR037041">
    <property type="entry name" value="Trigger_fac_C_sf"/>
</dbReference>
<dbReference type="InterPro" id="IPR008881">
    <property type="entry name" value="Trigger_fac_ribosome-bd_bac"/>
</dbReference>
<dbReference type="InterPro" id="IPR036611">
    <property type="entry name" value="Trigger_fac_ribosome-bd_sf"/>
</dbReference>
<dbReference type="InterPro" id="IPR027304">
    <property type="entry name" value="Trigger_fact/SurA_dom_sf"/>
</dbReference>
<dbReference type="NCBIfam" id="TIGR00115">
    <property type="entry name" value="tig"/>
    <property type="match status" value="1"/>
</dbReference>
<dbReference type="PANTHER" id="PTHR30560">
    <property type="entry name" value="TRIGGER FACTOR CHAPERONE AND PEPTIDYL-PROLYL CIS/TRANS ISOMERASE"/>
    <property type="match status" value="1"/>
</dbReference>
<dbReference type="PANTHER" id="PTHR30560:SF3">
    <property type="entry name" value="TRIGGER FACTOR-LIKE PROTEIN TIG, CHLOROPLASTIC"/>
    <property type="match status" value="1"/>
</dbReference>
<dbReference type="Pfam" id="PF00254">
    <property type="entry name" value="FKBP_C"/>
    <property type="match status" value="1"/>
</dbReference>
<dbReference type="Pfam" id="PF05698">
    <property type="entry name" value="Trigger_C"/>
    <property type="match status" value="1"/>
</dbReference>
<dbReference type="Pfam" id="PF05697">
    <property type="entry name" value="Trigger_N"/>
    <property type="match status" value="1"/>
</dbReference>
<dbReference type="PIRSF" id="PIRSF003095">
    <property type="entry name" value="Trigger_factor"/>
    <property type="match status" value="1"/>
</dbReference>
<dbReference type="SUPFAM" id="SSF54534">
    <property type="entry name" value="FKBP-like"/>
    <property type="match status" value="1"/>
</dbReference>
<dbReference type="SUPFAM" id="SSF109998">
    <property type="entry name" value="Triger factor/SurA peptide-binding domain-like"/>
    <property type="match status" value="1"/>
</dbReference>
<dbReference type="SUPFAM" id="SSF102735">
    <property type="entry name" value="Trigger factor ribosome-binding domain"/>
    <property type="match status" value="1"/>
</dbReference>
<dbReference type="PROSITE" id="PS50059">
    <property type="entry name" value="FKBP_PPIASE"/>
    <property type="match status" value="1"/>
</dbReference>
<organism>
    <name type="scientific">Yersinia enterocolitica serotype O:8 / biotype 1B (strain NCTC 13174 / 8081)</name>
    <dbReference type="NCBI Taxonomy" id="393305"/>
    <lineage>
        <taxon>Bacteria</taxon>
        <taxon>Pseudomonadati</taxon>
        <taxon>Pseudomonadota</taxon>
        <taxon>Gammaproteobacteria</taxon>
        <taxon>Enterobacterales</taxon>
        <taxon>Yersiniaceae</taxon>
        <taxon>Yersinia</taxon>
    </lineage>
</organism>
<feature type="chain" id="PRO_1000022782" description="Trigger factor">
    <location>
        <begin position="1"/>
        <end position="434"/>
    </location>
</feature>
<feature type="domain" description="PPIase FKBP-type" evidence="1">
    <location>
        <begin position="161"/>
        <end position="246"/>
    </location>
</feature>
<gene>
    <name evidence="1" type="primary">tig</name>
    <name type="ordered locus">YE3135</name>
</gene>
<name>TIG_YERE8</name>
<reference key="1">
    <citation type="journal article" date="2006" name="PLoS Genet.">
        <title>The complete genome sequence and comparative genome analysis of the high pathogenicity Yersinia enterocolitica strain 8081.</title>
        <authorList>
            <person name="Thomson N.R."/>
            <person name="Howard S."/>
            <person name="Wren B.W."/>
            <person name="Holden M.T.G."/>
            <person name="Crossman L."/>
            <person name="Challis G.L."/>
            <person name="Churcher C."/>
            <person name="Mungall K."/>
            <person name="Brooks K."/>
            <person name="Chillingworth T."/>
            <person name="Feltwell T."/>
            <person name="Abdellah Z."/>
            <person name="Hauser H."/>
            <person name="Jagels K."/>
            <person name="Maddison M."/>
            <person name="Moule S."/>
            <person name="Sanders M."/>
            <person name="Whitehead S."/>
            <person name="Quail M.A."/>
            <person name="Dougan G."/>
            <person name="Parkhill J."/>
            <person name="Prentice M.B."/>
        </authorList>
    </citation>
    <scope>NUCLEOTIDE SEQUENCE [LARGE SCALE GENOMIC DNA]</scope>
    <source>
        <strain>NCTC 13174 / 8081</strain>
    </source>
</reference>
<evidence type="ECO:0000255" key="1">
    <source>
        <dbReference type="HAMAP-Rule" id="MF_00303"/>
    </source>
</evidence>